<organism>
    <name type="scientific">Escherichia phage RB69</name>
    <name type="common">Bacteriophage RB69</name>
    <dbReference type="NCBI Taxonomy" id="12353"/>
    <lineage>
        <taxon>Viruses</taxon>
        <taxon>Duplodnaviria</taxon>
        <taxon>Heunggongvirae</taxon>
        <taxon>Uroviricota</taxon>
        <taxon>Caudoviricetes</taxon>
        <taxon>Straboviridae</taxon>
        <taxon>Tevenvirinae</taxon>
        <taxon>Mosigvirus</taxon>
        <taxon>Mosigvirus RB69</taxon>
    </lineage>
</organism>
<organismHost>
    <name type="scientific">Escherichia coli</name>
    <dbReference type="NCBI Taxonomy" id="562"/>
</organismHost>
<proteinExistence type="inferred from homology"/>
<reference key="1">
    <citation type="journal article" date="1998" name="J. Bacteriol.">
        <title>Divergence of a DNA replication gene cluster in the T4-related bacteriophage RB69.</title>
        <authorList>
            <person name="Yeh L.-S."/>
            <person name="Hsu T."/>
            <person name="Karam J.D."/>
        </authorList>
    </citation>
    <scope>NUCLEOTIDE SEQUENCE [GENOMIC DNA]</scope>
</reference>
<reference key="2">
    <citation type="submission" date="2003-05" db="EMBL/GenBank/DDBJ databases">
        <title>Enterobacteria phage RB69 complete genome.</title>
        <authorList>
            <person name="Petrov V."/>
            <person name="Nolan J."/>
            <person name="Chin D."/>
            <person name="Letarov A."/>
            <person name="Krisch H.M."/>
            <person name="Karam J.D."/>
        </authorList>
    </citation>
    <scope>NUCLEOTIDE SEQUENCE [LARGE SCALE GENOMIC DNA]</scope>
</reference>
<keyword id="KW-0067">ATP-binding</keyword>
<keyword id="KW-0235">DNA replication</keyword>
<keyword id="KW-0238">DNA-binding</keyword>
<keyword id="KW-0378">Hydrolase</keyword>
<keyword id="KW-0547">Nucleotide-binding</keyword>
<keyword id="KW-1185">Reference proteome</keyword>
<keyword id="KW-1194">Viral DNA replication</keyword>
<feature type="chain" id="PRO_0000164928" description="Sliding-clamp-loader large subunit">
    <location>
        <begin position="1"/>
        <end position="320"/>
    </location>
</feature>
<feature type="binding site" evidence="1">
    <location>
        <begin position="12"/>
        <end position="15"/>
    </location>
    <ligand>
        <name>ATP</name>
        <dbReference type="ChEBI" id="CHEBI:30616"/>
    </ligand>
</feature>
<feature type="binding site" evidence="1">
    <location>
        <position position="24"/>
    </location>
    <ligand>
        <name>ATP</name>
        <dbReference type="ChEBI" id="CHEBI:30616"/>
    </ligand>
</feature>
<feature type="binding site" evidence="1">
    <location>
        <begin position="53"/>
        <end position="58"/>
    </location>
    <ligand>
        <name>ATP</name>
        <dbReference type="ChEBI" id="CHEBI:30616"/>
    </ligand>
</feature>
<feature type="binding site" evidence="1">
    <location>
        <position position="205"/>
    </location>
    <ligand>
        <name>ATP</name>
        <dbReference type="ChEBI" id="CHEBI:30616"/>
    </ligand>
</feature>
<sequence>MITINSKEHILEQKYRPSSIDECILPAYDHETFKSLVSKGKLPHIILHSPSPGTGKTTVAKALCNDINAEMMFVNGSDCKIDFVRGPLTAFARSVSMEGKPKVIVIDEFDRSGLAESQRHLRTFMEEFSSNCSIIITANNIDGIIEPLRSRCRVIEFGRPTEEDKISMMKKMIHRMVEICKNENIEIADMKVVAALVKKNFPDFRRTIGQLDQYSSKGVLDAGILSIVTNDRGTVSDVIEAMKNKDIKQLRALAPKYAADYSWFIDKLVSECYDQVAPGKSIISLYEIAGENNKFHGLASNIELHVMYMLLQLTCELTWK</sequence>
<dbReference type="EC" id="3.6.4.-" evidence="1"/>
<dbReference type="EMBL" id="AF039565">
    <property type="protein sequence ID" value="AAC39311.1"/>
    <property type="molecule type" value="Genomic_DNA"/>
</dbReference>
<dbReference type="EMBL" id="AY303349">
    <property type="protein sequence ID" value="AAP75961.1"/>
    <property type="molecule type" value="Genomic_DNA"/>
</dbReference>
<dbReference type="RefSeq" id="NP_861749.1">
    <property type="nucleotide sequence ID" value="NC_004928.1"/>
</dbReference>
<dbReference type="SMR" id="O64301"/>
<dbReference type="GeneID" id="1494175"/>
<dbReference type="KEGG" id="vg:1494175"/>
<dbReference type="OrthoDB" id="4962at10239"/>
<dbReference type="Proteomes" id="UP000000876">
    <property type="component" value="Genome"/>
</dbReference>
<dbReference type="GO" id="GO:0005524">
    <property type="term" value="F:ATP binding"/>
    <property type="evidence" value="ECO:0007669"/>
    <property type="project" value="UniProtKB-UniRule"/>
</dbReference>
<dbReference type="GO" id="GO:0016887">
    <property type="term" value="F:ATP hydrolysis activity"/>
    <property type="evidence" value="ECO:0007669"/>
    <property type="project" value="UniProtKB-UniRule"/>
</dbReference>
<dbReference type="GO" id="GO:0003677">
    <property type="term" value="F:DNA binding"/>
    <property type="evidence" value="ECO:0007669"/>
    <property type="project" value="UniProtKB-UniRule"/>
</dbReference>
<dbReference type="GO" id="GO:0003689">
    <property type="term" value="F:DNA clamp loader activity"/>
    <property type="evidence" value="ECO:0007669"/>
    <property type="project" value="UniProtKB-UniRule"/>
</dbReference>
<dbReference type="GO" id="GO:0006281">
    <property type="term" value="P:DNA repair"/>
    <property type="evidence" value="ECO:0007669"/>
    <property type="project" value="TreeGrafter"/>
</dbReference>
<dbReference type="GO" id="GO:0006261">
    <property type="term" value="P:DNA-templated DNA replication"/>
    <property type="evidence" value="ECO:0007669"/>
    <property type="project" value="TreeGrafter"/>
</dbReference>
<dbReference type="GO" id="GO:0039693">
    <property type="term" value="P:viral DNA genome replication"/>
    <property type="evidence" value="ECO:0007669"/>
    <property type="project" value="UniProtKB-UniRule"/>
</dbReference>
<dbReference type="CDD" id="cd00009">
    <property type="entry name" value="AAA"/>
    <property type="match status" value="1"/>
</dbReference>
<dbReference type="Gene3D" id="1.10.8.60">
    <property type="match status" value="1"/>
</dbReference>
<dbReference type="Gene3D" id="1.20.272.10">
    <property type="match status" value="1"/>
</dbReference>
<dbReference type="Gene3D" id="3.40.50.300">
    <property type="entry name" value="P-loop containing nucleotide triphosphate hydrolases"/>
    <property type="match status" value="1"/>
</dbReference>
<dbReference type="HAMAP" id="MF_04162">
    <property type="entry name" value="T4_Clamp_Loader_L"/>
    <property type="match status" value="1"/>
</dbReference>
<dbReference type="InterPro" id="IPR003593">
    <property type="entry name" value="AAA+_ATPase"/>
</dbReference>
<dbReference type="InterPro" id="IPR003959">
    <property type="entry name" value="ATPase_AAA_core"/>
</dbReference>
<dbReference type="InterPro" id="IPR050238">
    <property type="entry name" value="DNA_Rep/Repair_Clamp_Loader"/>
</dbReference>
<dbReference type="InterPro" id="IPR048817">
    <property type="entry name" value="Gp44_C"/>
</dbReference>
<dbReference type="InterPro" id="IPR048815">
    <property type="entry name" value="Gp44_lid"/>
</dbReference>
<dbReference type="InterPro" id="IPR027417">
    <property type="entry name" value="P-loop_NTPase"/>
</dbReference>
<dbReference type="InterPro" id="IPR046388">
    <property type="entry name" value="T4_Clamp_Loader_L"/>
</dbReference>
<dbReference type="PANTHER" id="PTHR11669">
    <property type="entry name" value="REPLICATION FACTOR C / DNA POLYMERASE III GAMMA-TAU SUBUNIT"/>
    <property type="match status" value="1"/>
</dbReference>
<dbReference type="PANTHER" id="PTHR11669:SF20">
    <property type="entry name" value="REPLICATION FACTOR C SUBUNIT 4"/>
    <property type="match status" value="1"/>
</dbReference>
<dbReference type="Pfam" id="PF00004">
    <property type="entry name" value="AAA"/>
    <property type="match status" value="1"/>
</dbReference>
<dbReference type="Pfam" id="PF21429">
    <property type="entry name" value="Gp44_C"/>
    <property type="match status" value="1"/>
</dbReference>
<dbReference type="Pfam" id="PF21328">
    <property type="entry name" value="Gp44_lid"/>
    <property type="match status" value="1"/>
</dbReference>
<dbReference type="SMART" id="SM00382">
    <property type="entry name" value="AAA"/>
    <property type="match status" value="1"/>
</dbReference>
<dbReference type="SUPFAM" id="SSF52540">
    <property type="entry name" value="P-loop containing nucleoside triphosphate hydrolases"/>
    <property type="match status" value="1"/>
</dbReference>
<evidence type="ECO:0000255" key="1">
    <source>
        <dbReference type="HAMAP-Rule" id="MF_04162"/>
    </source>
</evidence>
<comment type="function">
    <text evidence="1">Forms the sliding-clamp-loader together with the small subunit. Functions as an ATPase enzyme. The clamp loader holds the clamp in an open conformation and places it onto the DNA. 4 ATP molecules must bind to the sliding-clamp-loader before the latter can open the sliding clamp. ATP hydrolysis triggers the detachment of the sliding clamp from the sliding-clamp-loader, freeing the sliding clamp to track along DNA.</text>
</comment>
<comment type="subunit">
    <text evidence="1">The sliding-clamp-loader consists of 4 large subunits and 1 small subunit. Interacts with the sliding clamp; this interaction allows the sliding-clamp-loader to open the sliding clamp. Part of the replicase complex that includes the DNA polymerase, the polymerase clamp, the clamp loader complex, the single-stranded DNA binding protein, the primase, the helicase and the helicase assembly factor.</text>
</comment>
<comment type="similarity">
    <text evidence="1">Belongs to the Tevenvirinae sliding-clamp-loader large subunit family.</text>
</comment>
<protein>
    <recommendedName>
        <fullName evidence="1">Sliding-clamp-loader large subunit</fullName>
        <ecNumber evidence="1">3.6.4.-</ecNumber>
    </recommendedName>
    <alternativeName>
        <fullName evidence="1">Clamp loader gp44 subunit</fullName>
    </alternativeName>
    <alternativeName>
        <fullName>Gene product 44</fullName>
        <shortName>gp44</shortName>
    </alternativeName>
</protein>
<name>LOADL_BPR69</name>
<accession>O64301</accession>
<accession>Q76XX7</accession>
<gene>
    <name type="primary">44</name>
</gene>